<evidence type="ECO:0000250" key="1"/>
<evidence type="ECO:0000305" key="2"/>
<proteinExistence type="evidence at protein level"/>
<reference key="1">
    <citation type="journal article" date="1997" name="Plant Physiol. Biochem.">
        <title>An esterase neosynthesized in post-germinated sunflower seeds is related to a new family of lipolytic enzymes.</title>
        <authorList>
            <person name="Beisson F."/>
            <person name="Gardies A.-M."/>
            <person name="Teissere M."/>
            <person name="Ferte N."/>
            <person name="Noat G."/>
        </authorList>
    </citation>
    <scope>PROTEIN SEQUENCE</scope>
    <source>
        <strain>cv. Rustica / var. Euroflor</strain>
        <tissue>Seed</tissue>
    </source>
</reference>
<reference key="2">
    <citation type="journal article" date="1995" name="Biochim. Biophys. Acta">
        <title>Purification and characterization of a fatty acyl-ester hydrolase from post-germinated sunflower seeds.</title>
        <authorList>
            <person name="Teissere M."/>
            <person name="Borel M."/>
            <person name="Caillol B."/>
            <person name="Nari J."/>
            <person name="Gardies A.-M."/>
            <person name="Noat G."/>
        </authorList>
    </citation>
    <scope>CHARACTERIZATION</scope>
</reference>
<protein>
    <recommendedName>
        <fullName>Seed fatty acyl-ester hydrolase</fullName>
        <ecNumber>3.1.1.1</ecNumber>
    </recommendedName>
</protein>
<accession>P81098</accession>
<comment type="function">
    <text>Implicated in the breakdown of oil body-stored lipids during post-germination.</text>
</comment>
<comment type="catalytic activity">
    <reaction>
        <text>a carboxylic ester + H2O = an alcohol + a carboxylate + H(+)</text>
        <dbReference type="Rhea" id="RHEA:21164"/>
        <dbReference type="ChEBI" id="CHEBI:15377"/>
        <dbReference type="ChEBI" id="CHEBI:15378"/>
        <dbReference type="ChEBI" id="CHEBI:29067"/>
        <dbReference type="ChEBI" id="CHEBI:30879"/>
        <dbReference type="ChEBI" id="CHEBI:33308"/>
        <dbReference type="EC" id="3.1.1.1"/>
    </reaction>
</comment>
<comment type="tissue specificity">
    <text>Seed.</text>
</comment>
<comment type="developmental stage">
    <text>Post-germination.</text>
</comment>
<comment type="similarity">
    <text evidence="2">Belongs to the 'GDSL' lipolytic enzyme family.</text>
</comment>
<name>SFAH_HELAN</name>
<keyword id="KW-0903">Direct protein sequencing</keyword>
<keyword id="KW-0378">Hydrolase</keyword>
<keyword id="KW-0442">Lipid degradation</keyword>
<keyword id="KW-0443">Lipid metabolism</keyword>
<dbReference type="EC" id="3.1.1.1"/>
<dbReference type="GO" id="GO:0106435">
    <property type="term" value="F:carboxylesterase activity"/>
    <property type="evidence" value="ECO:0007669"/>
    <property type="project" value="UniProtKB-EC"/>
</dbReference>
<dbReference type="GO" id="GO:0016042">
    <property type="term" value="P:lipid catabolic process"/>
    <property type="evidence" value="ECO:0007669"/>
    <property type="project" value="UniProtKB-KW"/>
</dbReference>
<sequence length="18" mass="2058">DPQVPXYFIFGDSLYDNG</sequence>
<organism>
    <name type="scientific">Helianthus annuus</name>
    <name type="common">Common sunflower</name>
    <dbReference type="NCBI Taxonomy" id="4232"/>
    <lineage>
        <taxon>Eukaryota</taxon>
        <taxon>Viridiplantae</taxon>
        <taxon>Streptophyta</taxon>
        <taxon>Embryophyta</taxon>
        <taxon>Tracheophyta</taxon>
        <taxon>Spermatophyta</taxon>
        <taxon>Magnoliopsida</taxon>
        <taxon>eudicotyledons</taxon>
        <taxon>Gunneridae</taxon>
        <taxon>Pentapetalae</taxon>
        <taxon>asterids</taxon>
        <taxon>campanulids</taxon>
        <taxon>Asterales</taxon>
        <taxon>Asteraceae</taxon>
        <taxon>Asteroideae</taxon>
        <taxon>Heliantheae alliance</taxon>
        <taxon>Heliantheae</taxon>
        <taxon>Helianthus</taxon>
    </lineage>
</organism>
<feature type="chain" id="PRO_0000168118" description="Seed fatty acyl-ester hydrolase">
    <location>
        <begin position="1"/>
        <end position="18" status="greater than"/>
    </location>
</feature>
<feature type="active site" description="Nucleophile" evidence="1">
    <location>
        <position position="13"/>
    </location>
</feature>
<feature type="non-terminal residue">
    <location>
        <position position="18"/>
    </location>
</feature>